<feature type="chain" id="PRO_1000212731" description="Septation ring formation regulator EzrA">
    <location>
        <begin position="1"/>
        <end position="574"/>
    </location>
</feature>
<feature type="topological domain" description="Extracellular" evidence="1">
    <location>
        <begin position="1"/>
        <end position="7"/>
    </location>
</feature>
<feature type="transmembrane region" description="Helical" evidence="1">
    <location>
        <begin position="8"/>
        <end position="26"/>
    </location>
</feature>
<feature type="topological domain" description="Cytoplasmic" evidence="1">
    <location>
        <begin position="27"/>
        <end position="574"/>
    </location>
</feature>
<feature type="coiled-coil region" evidence="1">
    <location>
        <begin position="102"/>
        <end position="131"/>
    </location>
</feature>
<feature type="coiled-coil region" evidence="1">
    <location>
        <begin position="161"/>
        <end position="190"/>
    </location>
</feature>
<feature type="coiled-coil region" evidence="1">
    <location>
        <begin position="276"/>
        <end position="379"/>
    </location>
</feature>
<feature type="coiled-coil region" evidence="1">
    <location>
        <begin position="459"/>
        <end position="493"/>
    </location>
</feature>
<comment type="function">
    <text evidence="1">Negative regulator of FtsZ ring formation; modulates the frequency and position of FtsZ ring formation. Inhibits FtsZ ring formation at polar sites. Interacts either with FtsZ or with one of its binding partners to promote depolymerization.</text>
</comment>
<comment type="subcellular location">
    <subcellularLocation>
        <location evidence="1">Cell membrane</location>
        <topology evidence="1">Single-pass membrane protein</topology>
    </subcellularLocation>
    <text evidence="1">Colocalized with FtsZ to the nascent septal site.</text>
</comment>
<comment type="similarity">
    <text evidence="1">Belongs to the EzrA family.</text>
</comment>
<keyword id="KW-0131">Cell cycle</keyword>
<keyword id="KW-0132">Cell division</keyword>
<keyword id="KW-1003">Cell membrane</keyword>
<keyword id="KW-0175">Coiled coil</keyword>
<keyword id="KW-0472">Membrane</keyword>
<keyword id="KW-0717">Septation</keyword>
<keyword id="KW-0812">Transmembrane</keyword>
<keyword id="KW-1133">Transmembrane helix</keyword>
<organism>
    <name type="scientific">Streptococcus equi subsp. zooepidemicus (strain H70)</name>
    <dbReference type="NCBI Taxonomy" id="553483"/>
    <lineage>
        <taxon>Bacteria</taxon>
        <taxon>Bacillati</taxon>
        <taxon>Bacillota</taxon>
        <taxon>Bacilli</taxon>
        <taxon>Lactobacillales</taxon>
        <taxon>Streptococcaceae</taxon>
        <taxon>Streptococcus</taxon>
    </lineage>
</organism>
<gene>
    <name evidence="1" type="primary">ezrA</name>
    <name type="ordered locus">SZO_11860</name>
</gene>
<sequence length="574" mass="66075">MSSGIILLIVAIVLLVIIAYLVGVIIRKRNDTLITSLEERKQALFGLPVNDEIEEVKSLHLIGQSQTSFREWNQKWVDLTLNTFTDIEKHIFEAEHLNDTFNFIRAKHEINSVESQLNLVEEDITAIREALGILKEQEEKNSARVTHALDLYEKLQASVAENEDNFGSTMAEIEKQMKNIEAEFSQFVALNSSGDPVEAAEVLDKAEEHTIALGQITEQIPAIVAKLEDDFPDQLDDLETGYRRLLEENYHFPEKNIEARFQEIRESIRANSSELVTLDLDRARDENTHIQERIDSLYELFEREIAAYKVVAKNSKILPRYLAHAKHNNEQLKHEIARLSRKYILSENEGLNIKAFDKDLKDIEDNVLEIAEAFDQQEKPFSELQLILDRSIKTLASVESGQMDVFAAVKDIEKIESQARQHLEIYVTQLHMIKRYMEKRNLPGIPQDFLSTFFTTSSQLEALMDELSRGRINIEAVSRLSEVATAAIANLEELTYQVVQHATLTEQLLQYSNRYRSFEAGVQNSFEHALKLFEVDNDYQASFDEISYALETVEPGVTERFVNSYEKTRERIRF</sequence>
<dbReference type="EMBL" id="FM204884">
    <property type="protein sequence ID" value="CAW99643.1"/>
    <property type="molecule type" value="Genomic_DNA"/>
</dbReference>
<dbReference type="SMR" id="C0MH92"/>
<dbReference type="KEGG" id="seq:SZO_11860"/>
<dbReference type="eggNOG" id="COG4477">
    <property type="taxonomic scope" value="Bacteria"/>
</dbReference>
<dbReference type="HOGENOM" id="CLU_034079_2_0_9"/>
<dbReference type="Proteomes" id="UP000001368">
    <property type="component" value="Chromosome"/>
</dbReference>
<dbReference type="GO" id="GO:0005886">
    <property type="term" value="C:plasma membrane"/>
    <property type="evidence" value="ECO:0007669"/>
    <property type="project" value="UniProtKB-SubCell"/>
</dbReference>
<dbReference type="GO" id="GO:0005940">
    <property type="term" value="C:septin ring"/>
    <property type="evidence" value="ECO:0007669"/>
    <property type="project" value="InterPro"/>
</dbReference>
<dbReference type="GO" id="GO:0000917">
    <property type="term" value="P:division septum assembly"/>
    <property type="evidence" value="ECO:0007669"/>
    <property type="project" value="UniProtKB-KW"/>
</dbReference>
<dbReference type="GO" id="GO:0000921">
    <property type="term" value="P:septin ring assembly"/>
    <property type="evidence" value="ECO:0007669"/>
    <property type="project" value="InterPro"/>
</dbReference>
<dbReference type="HAMAP" id="MF_00728">
    <property type="entry name" value="EzrA"/>
    <property type="match status" value="1"/>
</dbReference>
<dbReference type="InterPro" id="IPR010379">
    <property type="entry name" value="EzrA"/>
</dbReference>
<dbReference type="NCBIfam" id="NF003407">
    <property type="entry name" value="PRK04778.1-1"/>
    <property type="match status" value="1"/>
</dbReference>
<dbReference type="NCBIfam" id="NF003410">
    <property type="entry name" value="PRK04778.1-4"/>
    <property type="match status" value="1"/>
</dbReference>
<dbReference type="Pfam" id="PF06160">
    <property type="entry name" value="EzrA"/>
    <property type="match status" value="1"/>
</dbReference>
<accession>C0MH92</accession>
<evidence type="ECO:0000255" key="1">
    <source>
        <dbReference type="HAMAP-Rule" id="MF_00728"/>
    </source>
</evidence>
<protein>
    <recommendedName>
        <fullName evidence="1">Septation ring formation regulator EzrA</fullName>
    </recommendedName>
</protein>
<proteinExistence type="inferred from homology"/>
<reference key="1">
    <citation type="journal article" date="2009" name="PLoS Pathog.">
        <title>Genomic evidence for the evolution of Streptococcus equi: host restriction, increased virulence, and genetic exchange with human pathogens.</title>
        <authorList>
            <person name="Holden M.T.G."/>
            <person name="Heather Z."/>
            <person name="Paillot R."/>
            <person name="Steward K.F."/>
            <person name="Webb K."/>
            <person name="Ainslie F."/>
            <person name="Jourdan T."/>
            <person name="Bason N.C."/>
            <person name="Holroyd N.E."/>
            <person name="Mungall K."/>
            <person name="Quail M.A."/>
            <person name="Sanders M."/>
            <person name="Simmonds M."/>
            <person name="Willey D."/>
            <person name="Brooks K."/>
            <person name="Aanensen D.M."/>
            <person name="Spratt B.G."/>
            <person name="Jolley K.A."/>
            <person name="Maiden M.C.J."/>
            <person name="Kehoe M."/>
            <person name="Chanter N."/>
            <person name="Bentley S.D."/>
            <person name="Robinson C."/>
            <person name="Maskell D.J."/>
            <person name="Parkhill J."/>
            <person name="Waller A.S."/>
        </authorList>
    </citation>
    <scope>NUCLEOTIDE SEQUENCE [LARGE SCALE GENOMIC DNA]</scope>
    <source>
        <strain>H70</strain>
    </source>
</reference>
<name>EZRA_STRS7</name>